<evidence type="ECO:0000255" key="1">
    <source>
        <dbReference type="HAMAP-Rule" id="MF_01151"/>
    </source>
</evidence>
<evidence type="ECO:0000256" key="2">
    <source>
        <dbReference type="SAM" id="MobiDB-lite"/>
    </source>
</evidence>
<reference key="1">
    <citation type="submission" date="2008-05" db="EMBL/GenBank/DDBJ databases">
        <title>Complete sequence of chromosome 1 of Ralstonia pickettii 12J.</title>
        <authorList>
            <person name="Lucas S."/>
            <person name="Copeland A."/>
            <person name="Lapidus A."/>
            <person name="Glavina del Rio T."/>
            <person name="Dalin E."/>
            <person name="Tice H."/>
            <person name="Bruce D."/>
            <person name="Goodwin L."/>
            <person name="Pitluck S."/>
            <person name="Meincke L."/>
            <person name="Brettin T."/>
            <person name="Detter J.C."/>
            <person name="Han C."/>
            <person name="Kuske C.R."/>
            <person name="Schmutz J."/>
            <person name="Larimer F."/>
            <person name="Land M."/>
            <person name="Hauser L."/>
            <person name="Kyrpides N."/>
            <person name="Mikhailova N."/>
            <person name="Marsh T."/>
            <person name="Richardson P."/>
        </authorList>
    </citation>
    <scope>NUCLEOTIDE SEQUENCE [LARGE SCALE GENOMIC DNA]</scope>
    <source>
        <strain>12J</strain>
    </source>
</reference>
<comment type="function">
    <text evidence="1">Participates actively in the response to hyperosmotic and heat shock by preventing the aggregation of stress-denatured proteins, in association with DnaK and GrpE. It is the nucleotide exchange factor for DnaK and may function as a thermosensor. Unfolded proteins bind initially to DnaJ; upon interaction with the DnaJ-bound protein, DnaK hydrolyzes its bound ATP, resulting in the formation of a stable complex. GrpE releases ADP from DnaK; ATP binding to DnaK triggers the release of the substrate protein, thus completing the reaction cycle. Several rounds of ATP-dependent interactions between DnaJ, DnaK and GrpE are required for fully efficient folding.</text>
</comment>
<comment type="subunit">
    <text evidence="1">Homodimer.</text>
</comment>
<comment type="subcellular location">
    <subcellularLocation>
        <location evidence="1">Cytoplasm</location>
    </subcellularLocation>
</comment>
<comment type="similarity">
    <text evidence="1">Belongs to the GrpE family.</text>
</comment>
<feature type="chain" id="PRO_1000137601" description="Protein GrpE">
    <location>
        <begin position="1"/>
        <end position="215"/>
    </location>
</feature>
<feature type="region of interest" description="Disordered" evidence="2">
    <location>
        <begin position="1"/>
        <end position="52"/>
    </location>
</feature>
<feature type="compositionally biased region" description="Polar residues" evidence="2">
    <location>
        <begin position="1"/>
        <end position="28"/>
    </location>
</feature>
<feature type="compositionally biased region" description="Low complexity" evidence="2">
    <location>
        <begin position="29"/>
        <end position="52"/>
    </location>
</feature>
<keyword id="KW-0143">Chaperone</keyword>
<keyword id="KW-0963">Cytoplasm</keyword>
<keyword id="KW-0346">Stress response</keyword>
<sequence>MKHTSDTPSNSDMPSDSQATQPNASATGQAAHAYSSQAQRASADAQAVAGDEAAVAEAVADVDVAELRRQLEAAEEKARQNYENWARATAEGENIRRRGQDDVAKAHKFAIEGFAEYLLPVMDSLQAALADTSGDATKLREGVELTLKQLYAAFEKGRVTELNPVGEKFDPHRHQAISMVPADQEANTVVAVLQRGYTLADRVLRPALVTVAAPK</sequence>
<accession>B2UBP7</accession>
<protein>
    <recommendedName>
        <fullName evidence="1">Protein GrpE</fullName>
    </recommendedName>
    <alternativeName>
        <fullName evidence="1">HSP-70 cofactor</fullName>
    </alternativeName>
</protein>
<dbReference type="EMBL" id="CP001068">
    <property type="protein sequence ID" value="ACD27997.1"/>
    <property type="molecule type" value="Genomic_DNA"/>
</dbReference>
<dbReference type="SMR" id="B2UBP7"/>
<dbReference type="STRING" id="402626.Rpic_2874"/>
<dbReference type="KEGG" id="rpi:Rpic_2874"/>
<dbReference type="PATRIC" id="fig|402626.5.peg.4011"/>
<dbReference type="eggNOG" id="COG0576">
    <property type="taxonomic scope" value="Bacteria"/>
</dbReference>
<dbReference type="HOGENOM" id="CLU_057217_6_1_4"/>
<dbReference type="GO" id="GO:0005829">
    <property type="term" value="C:cytosol"/>
    <property type="evidence" value="ECO:0007669"/>
    <property type="project" value="TreeGrafter"/>
</dbReference>
<dbReference type="GO" id="GO:0000774">
    <property type="term" value="F:adenyl-nucleotide exchange factor activity"/>
    <property type="evidence" value="ECO:0007669"/>
    <property type="project" value="InterPro"/>
</dbReference>
<dbReference type="GO" id="GO:0042803">
    <property type="term" value="F:protein homodimerization activity"/>
    <property type="evidence" value="ECO:0007669"/>
    <property type="project" value="InterPro"/>
</dbReference>
<dbReference type="GO" id="GO:0051087">
    <property type="term" value="F:protein-folding chaperone binding"/>
    <property type="evidence" value="ECO:0007669"/>
    <property type="project" value="InterPro"/>
</dbReference>
<dbReference type="GO" id="GO:0051082">
    <property type="term" value="F:unfolded protein binding"/>
    <property type="evidence" value="ECO:0007669"/>
    <property type="project" value="TreeGrafter"/>
</dbReference>
<dbReference type="GO" id="GO:0006457">
    <property type="term" value="P:protein folding"/>
    <property type="evidence" value="ECO:0007669"/>
    <property type="project" value="InterPro"/>
</dbReference>
<dbReference type="CDD" id="cd00446">
    <property type="entry name" value="GrpE"/>
    <property type="match status" value="1"/>
</dbReference>
<dbReference type="FunFam" id="2.30.22.10:FF:000001">
    <property type="entry name" value="Protein GrpE"/>
    <property type="match status" value="1"/>
</dbReference>
<dbReference type="Gene3D" id="3.90.20.20">
    <property type="match status" value="1"/>
</dbReference>
<dbReference type="Gene3D" id="2.30.22.10">
    <property type="entry name" value="Head domain of nucleotide exchange factor GrpE"/>
    <property type="match status" value="1"/>
</dbReference>
<dbReference type="HAMAP" id="MF_01151">
    <property type="entry name" value="GrpE"/>
    <property type="match status" value="1"/>
</dbReference>
<dbReference type="InterPro" id="IPR000740">
    <property type="entry name" value="GrpE"/>
</dbReference>
<dbReference type="InterPro" id="IPR013805">
    <property type="entry name" value="GrpE_coiled_coil"/>
</dbReference>
<dbReference type="InterPro" id="IPR009012">
    <property type="entry name" value="GrpE_head"/>
</dbReference>
<dbReference type="NCBIfam" id="NF010737">
    <property type="entry name" value="PRK14139.1"/>
    <property type="match status" value="1"/>
</dbReference>
<dbReference type="NCBIfam" id="NF010738">
    <property type="entry name" value="PRK14140.1"/>
    <property type="match status" value="1"/>
</dbReference>
<dbReference type="NCBIfam" id="NF010748">
    <property type="entry name" value="PRK14150.1"/>
    <property type="match status" value="1"/>
</dbReference>
<dbReference type="PANTHER" id="PTHR21237">
    <property type="entry name" value="GRPE PROTEIN"/>
    <property type="match status" value="1"/>
</dbReference>
<dbReference type="PANTHER" id="PTHR21237:SF23">
    <property type="entry name" value="GRPE PROTEIN HOMOLOG, MITOCHONDRIAL"/>
    <property type="match status" value="1"/>
</dbReference>
<dbReference type="Pfam" id="PF01025">
    <property type="entry name" value="GrpE"/>
    <property type="match status" value="1"/>
</dbReference>
<dbReference type="PRINTS" id="PR00773">
    <property type="entry name" value="GRPEPROTEIN"/>
</dbReference>
<dbReference type="SUPFAM" id="SSF58014">
    <property type="entry name" value="Coiled-coil domain of nucleotide exchange factor GrpE"/>
    <property type="match status" value="1"/>
</dbReference>
<dbReference type="SUPFAM" id="SSF51064">
    <property type="entry name" value="Head domain of nucleotide exchange factor GrpE"/>
    <property type="match status" value="1"/>
</dbReference>
<dbReference type="PROSITE" id="PS01071">
    <property type="entry name" value="GRPE"/>
    <property type="match status" value="1"/>
</dbReference>
<proteinExistence type="inferred from homology"/>
<name>GRPE_RALPJ</name>
<organism>
    <name type="scientific">Ralstonia pickettii (strain 12J)</name>
    <dbReference type="NCBI Taxonomy" id="402626"/>
    <lineage>
        <taxon>Bacteria</taxon>
        <taxon>Pseudomonadati</taxon>
        <taxon>Pseudomonadota</taxon>
        <taxon>Betaproteobacteria</taxon>
        <taxon>Burkholderiales</taxon>
        <taxon>Burkholderiaceae</taxon>
        <taxon>Ralstonia</taxon>
    </lineage>
</organism>
<gene>
    <name evidence="1" type="primary">grpE</name>
    <name type="ordered locus">Rpic_2874</name>
</gene>